<name>CDCA4_HUMAN</name>
<keyword id="KW-0539">Nucleus</keyword>
<keyword id="KW-1267">Proteomics identification</keyword>
<keyword id="KW-1185">Reference proteome</keyword>
<evidence type="ECO:0000250" key="1"/>
<evidence type="ECO:0000255" key="2">
    <source>
        <dbReference type="PROSITE-ProRule" id="PRU00396"/>
    </source>
</evidence>
<evidence type="ECO:0000269" key="3">
    <source>
    </source>
</evidence>
<evidence type="ECO:0000305" key="4"/>
<gene>
    <name type="primary">CDCA4</name>
    <name type="synonym">HEPP</name>
</gene>
<accession>Q9BXL8</accession>
<accession>Q8TB18</accession>
<accession>Q9NWK7</accession>
<sequence length="241" mass="26114">MFARGLKRKCVGHEEDVEGALAGLKTVSSYSLQRQSLLDMSLVKLQLCHMLVEPNLCRSVLIANTVRQIQEEMTQDGTWRTVAPQAAERAPLDRLVSTEILCRAAWGQEGAHPAPGLGDGHTQGPVSDLCPVTSAQAPRHLQSSAWEMDGPRENRGSFHKSLDQIFETLETKNPSCMEELFSDVDSPYYDLDTVLTGMMGGARPGPCEGLEGLAPATPGPSSSCKSDLGELDHVVEILVET</sequence>
<proteinExistence type="evidence at protein level"/>
<comment type="function">
    <text evidence="1 3">May participate in the regulation of cell proliferation through the E2F/RB pathway. May be involved in molecular regulation of hematopoietic stem cells and progenitor cell lineage commitment and differentiation (By similarity).</text>
</comment>
<comment type="interaction">
    <interactant intactId="EBI-1773949">
        <id>Q9BXL8</id>
    </interactant>
    <interactant intactId="EBI-8643161">
        <id>Q9NX04</id>
        <label>AIRIM</label>
    </interactant>
    <organismsDiffer>false</organismsDiffer>
    <experiments>3</experiments>
</comment>
<comment type="interaction">
    <interactant intactId="EBI-1773949">
        <id>Q9BXL8</id>
    </interactant>
    <interactant intactId="EBI-10229433">
        <id>Q13515</id>
        <label>BFSP2</label>
    </interactant>
    <organismsDiffer>false</organismsDiffer>
    <experiments>3</experiments>
</comment>
<comment type="interaction">
    <interactant intactId="EBI-1773949">
        <id>Q9BXL8</id>
    </interactant>
    <interactant intactId="EBI-6875961">
        <id>P02489</id>
        <label>CRYAA</label>
    </interactant>
    <organismsDiffer>false</organismsDiffer>
    <experiments>3</experiments>
</comment>
<comment type="interaction">
    <interactant intactId="EBI-1773949">
        <id>Q9BXL8</id>
    </interactant>
    <interactant intactId="EBI-744099">
        <id>Q9H0I2</id>
        <label>ENKD1</label>
    </interactant>
    <organismsDiffer>false</organismsDiffer>
    <experiments>3</experiments>
</comment>
<comment type="interaction">
    <interactant intactId="EBI-1773949">
        <id>Q9BXL8</id>
    </interactant>
    <interactant intactId="EBI-2565863">
        <id>P00488</id>
        <label>F13A1</label>
    </interactant>
    <organismsDiffer>false</organismsDiffer>
    <experiments>3</experiments>
</comment>
<comment type="interaction">
    <interactant intactId="EBI-1773949">
        <id>Q9BXL8</id>
    </interactant>
    <interactant intactId="EBI-2807642">
        <id>Q8WU58</id>
        <label>FAM222B</label>
    </interactant>
    <organismsDiffer>false</organismsDiffer>
    <experiments>3</experiments>
</comment>
<comment type="interaction">
    <interactant intactId="EBI-1773949">
        <id>Q9BXL8</id>
    </interactant>
    <interactant intactId="EBI-2513774">
        <id>O95363</id>
        <label>FARS2</label>
    </interactant>
    <organismsDiffer>false</organismsDiffer>
    <experiments>3</experiments>
</comment>
<comment type="interaction">
    <interactant intactId="EBI-1773949">
        <id>Q9BXL8</id>
    </interactant>
    <interactant intactId="EBI-744935">
        <id>Q9BVV2</id>
        <label>FNDC11</label>
    </interactant>
    <organismsDiffer>false</organismsDiffer>
    <experiments>3</experiments>
</comment>
<comment type="interaction">
    <interactant intactId="EBI-1773949">
        <id>Q9BXL8</id>
    </interactant>
    <interactant intactId="EBI-710124">
        <id>O60341</id>
        <label>KDM1A</label>
    </interactant>
    <organismsDiffer>false</organismsDiffer>
    <experiments>2</experiments>
</comment>
<comment type="interaction">
    <interactant intactId="EBI-1773949">
        <id>Q9BXL8</id>
    </interactant>
    <interactant intactId="EBI-739890">
        <id>Q9P2K6</id>
        <label>KLHL42</label>
    </interactant>
    <organismsDiffer>false</organismsDiffer>
    <experiments>3</experiments>
</comment>
<comment type="interaction">
    <interactant intactId="EBI-1773949">
        <id>Q9BXL8</id>
    </interactant>
    <interactant intactId="EBI-725647">
        <id>Q99732</id>
        <label>LITAF</label>
    </interactant>
    <organismsDiffer>false</organismsDiffer>
    <experiments>3</experiments>
</comment>
<comment type="interaction">
    <interactant intactId="EBI-1773949">
        <id>Q9BXL8</id>
    </interactant>
    <interactant intactId="EBI-2340269">
        <id>Q13064</id>
        <label>MKRN3</label>
    </interactant>
    <organismsDiffer>false</organismsDiffer>
    <experiments>3</experiments>
</comment>
<comment type="interaction">
    <interactant intactId="EBI-1773949">
        <id>Q9BXL8</id>
    </interactant>
    <interactant intactId="EBI-295391">
        <id>Q9BYG5</id>
        <label>PARD6B</label>
    </interactant>
    <organismsDiffer>false</organismsDiffer>
    <experiments>3</experiments>
</comment>
<comment type="interaction">
    <interactant intactId="EBI-1773949">
        <id>Q9BXL8</id>
    </interactant>
    <interactant intactId="EBI-50433196">
        <id>A0A6Q8PF08</id>
        <label>PMP22</label>
    </interactant>
    <organismsDiffer>false</organismsDiffer>
    <experiments>3</experiments>
</comment>
<comment type="interaction">
    <interactant intactId="EBI-1773949">
        <id>Q9BXL8</id>
    </interactant>
    <interactant intactId="EBI-912440">
        <id>Q96LA8</id>
        <label>PRMT6</label>
    </interactant>
    <organismsDiffer>false</organismsDiffer>
    <experiments>2</experiments>
</comment>
<comment type="interaction">
    <interactant intactId="EBI-1773949">
        <id>Q9BXL8</id>
    </interactant>
    <interactant intactId="EBI-79084">
        <id>Q92529</id>
        <label>SHC3</label>
    </interactant>
    <organismsDiffer>false</organismsDiffer>
    <experiments>3</experiments>
</comment>
<comment type="interaction">
    <interactant intactId="EBI-1773949">
        <id>Q9BXL8</id>
    </interactant>
    <interactant intactId="EBI-3921347">
        <id>P51687</id>
        <label>SUOX</label>
    </interactant>
    <organismsDiffer>false</organismsDiffer>
    <experiments>3</experiments>
</comment>
<comment type="interaction">
    <interactant intactId="EBI-1773949">
        <id>Q9BXL8</id>
    </interactant>
    <interactant intactId="EBI-349968">
        <id>O43463</id>
        <label>SUV39H1</label>
    </interactant>
    <organismsDiffer>false</organismsDiffer>
    <experiments>2</experiments>
</comment>
<comment type="interaction">
    <interactant intactId="EBI-1773949">
        <id>Q9BXL8</id>
    </interactant>
    <interactant intactId="EBI-723127">
        <id>Q9H5I1</id>
        <label>SUV39H2</label>
    </interactant>
    <organismsDiffer>false</organismsDiffer>
    <experiments>2</experiments>
</comment>
<comment type="interaction">
    <interactant intactId="EBI-1773949">
        <id>Q9BXL8</id>
    </interactant>
    <interactant intactId="EBI-954089">
        <id>O15273</id>
        <label>TCAP</label>
    </interactant>
    <organismsDiffer>false</organismsDiffer>
    <experiments>3</experiments>
</comment>
<comment type="interaction">
    <interactant intactId="EBI-1773949">
        <id>Q9BXL8</id>
    </interactant>
    <interactant intactId="EBI-2932492">
        <id>Q99757</id>
        <label>TXN2</label>
    </interactant>
    <organismsDiffer>false</organismsDiffer>
    <experiments>3</experiments>
</comment>
<comment type="subcellular location">
    <subcellularLocation>
        <location evidence="3">Nucleus</location>
    </subcellularLocation>
</comment>
<comment type="tissue specificity">
    <text evidence="3">Highest levels of expression in the pancreas, thymus, testis, spleen, liver, placenta and leukocytes. Relatively low levels in the lung, kidney, prostate, ovary, small intestine and colon. Hardly detectable, if at all, in the brain, skeletal muscle and heart.</text>
</comment>
<comment type="induction">
    <text evidence="3">By E2F1.</text>
</comment>
<comment type="sequence caution" evidence="4">
    <conflict type="erroneous initiation">
        <sequence resource="EMBL-CDS" id="BAA91373"/>
    </conflict>
</comment>
<dbReference type="EMBL" id="AF322239">
    <property type="protein sequence ID" value="AAK31075.1"/>
    <property type="molecule type" value="mRNA"/>
</dbReference>
<dbReference type="EMBL" id="BC011736">
    <property type="protein sequence ID" value="AAH11736.1"/>
    <property type="molecule type" value="mRNA"/>
</dbReference>
<dbReference type="EMBL" id="BC025263">
    <property type="protein sequence ID" value="AAH25263.1"/>
    <property type="molecule type" value="mRNA"/>
</dbReference>
<dbReference type="EMBL" id="AK000771">
    <property type="protein sequence ID" value="BAA91373.1"/>
    <property type="status" value="ALT_INIT"/>
    <property type="molecule type" value="mRNA"/>
</dbReference>
<dbReference type="CCDS" id="CCDS9996.1"/>
<dbReference type="RefSeq" id="NP_060425.2">
    <property type="nucleotide sequence ID" value="NM_017955.3"/>
</dbReference>
<dbReference type="RefSeq" id="NP_663747.1">
    <property type="nucleotide sequence ID" value="NM_145701.4"/>
</dbReference>
<dbReference type="BioGRID" id="120367">
    <property type="interactions" value="47"/>
</dbReference>
<dbReference type="FunCoup" id="Q9BXL8">
    <property type="interactions" value="3306"/>
</dbReference>
<dbReference type="IntAct" id="Q9BXL8">
    <property type="interactions" value="45"/>
</dbReference>
<dbReference type="MINT" id="Q9BXL8"/>
<dbReference type="STRING" id="9606.ENSP00000337226"/>
<dbReference type="GlyGen" id="Q9BXL8">
    <property type="glycosylation" value="1 site"/>
</dbReference>
<dbReference type="iPTMnet" id="Q9BXL8"/>
<dbReference type="PhosphoSitePlus" id="Q9BXL8"/>
<dbReference type="BioMuta" id="CDCA4"/>
<dbReference type="DMDM" id="32699606"/>
<dbReference type="jPOST" id="Q9BXL8"/>
<dbReference type="MassIVE" id="Q9BXL8"/>
<dbReference type="PaxDb" id="9606-ENSP00000337226"/>
<dbReference type="PeptideAtlas" id="Q9BXL8"/>
<dbReference type="ProteomicsDB" id="79451"/>
<dbReference type="Pumba" id="Q9BXL8"/>
<dbReference type="Antibodypedia" id="28296">
    <property type="antibodies" value="200 antibodies from 27 providers"/>
</dbReference>
<dbReference type="DNASU" id="55038"/>
<dbReference type="Ensembl" id="ENST00000336219.4">
    <property type="protein sequence ID" value="ENSP00000337226.3"/>
    <property type="gene ID" value="ENSG00000170779.11"/>
</dbReference>
<dbReference type="Ensembl" id="ENST00000392590.3">
    <property type="protein sequence ID" value="ENSP00000376369.3"/>
    <property type="gene ID" value="ENSG00000170779.11"/>
</dbReference>
<dbReference type="GeneID" id="55038"/>
<dbReference type="KEGG" id="hsa:55038"/>
<dbReference type="MANE-Select" id="ENST00000336219.4">
    <property type="protein sequence ID" value="ENSP00000337226.3"/>
    <property type="RefSeq nucleotide sequence ID" value="NM_017955.4"/>
    <property type="RefSeq protein sequence ID" value="NP_060425.2"/>
</dbReference>
<dbReference type="UCSC" id="uc001yqa.3">
    <property type="organism name" value="human"/>
</dbReference>
<dbReference type="AGR" id="HGNC:14625"/>
<dbReference type="CTD" id="55038"/>
<dbReference type="DisGeNET" id="55038"/>
<dbReference type="GeneCards" id="CDCA4"/>
<dbReference type="HGNC" id="HGNC:14625">
    <property type="gene designation" value="CDCA4"/>
</dbReference>
<dbReference type="HPA" id="ENSG00000170779">
    <property type="expression patterns" value="Tissue enhanced (bone)"/>
</dbReference>
<dbReference type="MIM" id="612270">
    <property type="type" value="gene"/>
</dbReference>
<dbReference type="neXtProt" id="NX_Q9BXL8"/>
<dbReference type="OpenTargets" id="ENSG00000170779"/>
<dbReference type="PharmGKB" id="PA26277"/>
<dbReference type="VEuPathDB" id="HostDB:ENSG00000170779"/>
<dbReference type="eggNOG" id="ENOG502QWNU">
    <property type="taxonomic scope" value="Eukaryota"/>
</dbReference>
<dbReference type="GeneTree" id="ENSGT00530000063867"/>
<dbReference type="HOGENOM" id="CLU_065586_1_0_1"/>
<dbReference type="InParanoid" id="Q9BXL8"/>
<dbReference type="OMA" id="SSVWEMD"/>
<dbReference type="OrthoDB" id="8735401at2759"/>
<dbReference type="PAN-GO" id="Q9BXL8">
    <property type="GO annotations" value="2 GO annotations based on evolutionary models"/>
</dbReference>
<dbReference type="PhylomeDB" id="Q9BXL8"/>
<dbReference type="TreeFam" id="TF101069"/>
<dbReference type="PathwayCommons" id="Q9BXL8"/>
<dbReference type="SignaLink" id="Q9BXL8"/>
<dbReference type="BioGRID-ORCS" id="55038">
    <property type="hits" value="14 hits in 1148 CRISPR screens"/>
</dbReference>
<dbReference type="CD-CODE" id="8C2F96ED">
    <property type="entry name" value="Centrosome"/>
</dbReference>
<dbReference type="ChiTaRS" id="CDCA4">
    <property type="organism name" value="human"/>
</dbReference>
<dbReference type="GenomeRNAi" id="55038"/>
<dbReference type="Pharos" id="Q9BXL8">
    <property type="development level" value="Tbio"/>
</dbReference>
<dbReference type="PRO" id="PR:Q9BXL8"/>
<dbReference type="Proteomes" id="UP000005640">
    <property type="component" value="Chromosome 14"/>
</dbReference>
<dbReference type="RNAct" id="Q9BXL8">
    <property type="molecule type" value="protein"/>
</dbReference>
<dbReference type="Bgee" id="ENSG00000170779">
    <property type="expression patterns" value="Expressed in secondary oocyte and 166 other cell types or tissues"/>
</dbReference>
<dbReference type="ExpressionAtlas" id="Q9BXL8">
    <property type="expression patterns" value="baseline and differential"/>
</dbReference>
<dbReference type="GO" id="GO:0005737">
    <property type="term" value="C:cytoplasm"/>
    <property type="evidence" value="ECO:0000318"/>
    <property type="project" value="GO_Central"/>
</dbReference>
<dbReference type="GO" id="GO:0005829">
    <property type="term" value="C:cytosol"/>
    <property type="evidence" value="ECO:0000314"/>
    <property type="project" value="HPA"/>
</dbReference>
<dbReference type="GO" id="GO:0005654">
    <property type="term" value="C:nucleoplasm"/>
    <property type="evidence" value="ECO:0000314"/>
    <property type="project" value="HPA"/>
</dbReference>
<dbReference type="GO" id="GO:0005634">
    <property type="term" value="C:nucleus"/>
    <property type="evidence" value="ECO:0000318"/>
    <property type="project" value="GO_Central"/>
</dbReference>
<dbReference type="GO" id="GO:0005886">
    <property type="term" value="C:plasma membrane"/>
    <property type="evidence" value="ECO:0000314"/>
    <property type="project" value="HPA"/>
</dbReference>
<dbReference type="GO" id="GO:0003713">
    <property type="term" value="F:transcription coactivator activity"/>
    <property type="evidence" value="ECO:0000318"/>
    <property type="project" value="GO_Central"/>
</dbReference>
<dbReference type="InterPro" id="IPR052262">
    <property type="entry name" value="E2F-SERTA_domain_protein"/>
</dbReference>
<dbReference type="InterPro" id="IPR009263">
    <property type="entry name" value="SERTA_dom"/>
</dbReference>
<dbReference type="PANTHER" id="PTHR16277">
    <property type="entry name" value="CELL DIVISION CYCLE ASSOCIATED PROTEIN 4/SERTA DOMAIN-CONTAINING PROTEIN 2"/>
    <property type="match status" value="1"/>
</dbReference>
<dbReference type="PANTHER" id="PTHR16277:SF6">
    <property type="entry name" value="CELL DIVISION CYCLE-ASSOCIATED PROTEIN 4"/>
    <property type="match status" value="1"/>
</dbReference>
<dbReference type="Pfam" id="PF06031">
    <property type="entry name" value="SERTA"/>
    <property type="match status" value="1"/>
</dbReference>
<dbReference type="PROSITE" id="PS51053">
    <property type="entry name" value="SERTA"/>
    <property type="match status" value="1"/>
</dbReference>
<reference key="1">
    <citation type="journal article" date="2001" name="Blood Cells Mol. Dis.">
        <title>Cloning and characterization of HEPP, a novel gene expressed preferentially in hematopoietic progenitors and mature blood cells.</title>
        <authorList>
            <person name="Abdullah J.M."/>
            <person name="Jing X."/>
            <person name="Spassov D.S."/>
            <person name="Nachtman R.G."/>
            <person name="Jurecic R."/>
        </authorList>
    </citation>
    <scope>NUCLEOTIDE SEQUENCE [MRNA]</scope>
</reference>
<reference key="2">
    <citation type="journal article" date="2004" name="Genome Res.">
        <title>The status, quality, and expansion of the NIH full-length cDNA project: the Mammalian Gene Collection (MGC).</title>
        <authorList>
            <consortium name="The MGC Project Team"/>
        </authorList>
    </citation>
    <scope>NUCLEOTIDE SEQUENCE [LARGE SCALE MRNA]</scope>
    <source>
        <tissue>B-cell</tissue>
        <tissue>Skin</tissue>
    </source>
</reference>
<reference key="3">
    <citation type="journal article" date="2004" name="Nat. Genet.">
        <title>Complete sequencing and characterization of 21,243 full-length human cDNAs.</title>
        <authorList>
            <person name="Ota T."/>
            <person name="Suzuki Y."/>
            <person name="Nishikawa T."/>
            <person name="Otsuki T."/>
            <person name="Sugiyama T."/>
            <person name="Irie R."/>
            <person name="Wakamatsu A."/>
            <person name="Hayashi K."/>
            <person name="Sato H."/>
            <person name="Nagai K."/>
            <person name="Kimura K."/>
            <person name="Makita H."/>
            <person name="Sekine M."/>
            <person name="Obayashi M."/>
            <person name="Nishi T."/>
            <person name="Shibahara T."/>
            <person name="Tanaka T."/>
            <person name="Ishii S."/>
            <person name="Yamamoto J."/>
            <person name="Saito K."/>
            <person name="Kawai Y."/>
            <person name="Isono Y."/>
            <person name="Nakamura Y."/>
            <person name="Nagahari K."/>
            <person name="Murakami K."/>
            <person name="Yasuda T."/>
            <person name="Iwayanagi T."/>
            <person name="Wagatsuma M."/>
            <person name="Shiratori A."/>
            <person name="Sudo H."/>
            <person name="Hosoiri T."/>
            <person name="Kaku Y."/>
            <person name="Kodaira H."/>
            <person name="Kondo H."/>
            <person name="Sugawara M."/>
            <person name="Takahashi M."/>
            <person name="Kanda K."/>
            <person name="Yokoi T."/>
            <person name="Furuya T."/>
            <person name="Kikkawa E."/>
            <person name="Omura Y."/>
            <person name="Abe K."/>
            <person name="Kamihara K."/>
            <person name="Katsuta N."/>
            <person name="Sato K."/>
            <person name="Tanikawa M."/>
            <person name="Yamazaki M."/>
            <person name="Ninomiya K."/>
            <person name="Ishibashi T."/>
            <person name="Yamashita H."/>
            <person name="Murakawa K."/>
            <person name="Fujimori K."/>
            <person name="Tanai H."/>
            <person name="Kimata M."/>
            <person name="Watanabe M."/>
            <person name="Hiraoka S."/>
            <person name="Chiba Y."/>
            <person name="Ishida S."/>
            <person name="Ono Y."/>
            <person name="Takiguchi S."/>
            <person name="Watanabe S."/>
            <person name="Yosida M."/>
            <person name="Hotuta T."/>
            <person name="Kusano J."/>
            <person name="Kanehori K."/>
            <person name="Takahashi-Fujii A."/>
            <person name="Hara H."/>
            <person name="Tanase T.-O."/>
            <person name="Nomura Y."/>
            <person name="Togiya S."/>
            <person name="Komai F."/>
            <person name="Hara R."/>
            <person name="Takeuchi K."/>
            <person name="Arita M."/>
            <person name="Imose N."/>
            <person name="Musashino K."/>
            <person name="Yuuki H."/>
            <person name="Oshima A."/>
            <person name="Sasaki N."/>
            <person name="Aotsuka S."/>
            <person name="Yoshikawa Y."/>
            <person name="Matsunawa H."/>
            <person name="Ichihara T."/>
            <person name="Shiohata N."/>
            <person name="Sano S."/>
            <person name="Moriya S."/>
            <person name="Momiyama H."/>
            <person name="Satoh N."/>
            <person name="Takami S."/>
            <person name="Terashima Y."/>
            <person name="Suzuki O."/>
            <person name="Nakagawa S."/>
            <person name="Senoh A."/>
            <person name="Mizoguchi H."/>
            <person name="Goto Y."/>
            <person name="Shimizu F."/>
            <person name="Wakebe H."/>
            <person name="Hishigaki H."/>
            <person name="Watanabe T."/>
            <person name="Sugiyama A."/>
            <person name="Takemoto M."/>
            <person name="Kawakami B."/>
            <person name="Yamazaki M."/>
            <person name="Watanabe K."/>
            <person name="Kumagai A."/>
            <person name="Itakura S."/>
            <person name="Fukuzumi Y."/>
            <person name="Fujimori Y."/>
            <person name="Komiyama M."/>
            <person name="Tashiro H."/>
            <person name="Tanigami A."/>
            <person name="Fujiwara T."/>
            <person name="Ono T."/>
            <person name="Yamada K."/>
            <person name="Fujii Y."/>
            <person name="Ozaki K."/>
            <person name="Hirao M."/>
            <person name="Ohmori Y."/>
            <person name="Kawabata A."/>
            <person name="Hikiji T."/>
            <person name="Kobatake N."/>
            <person name="Inagaki H."/>
            <person name="Ikema Y."/>
            <person name="Okamoto S."/>
            <person name="Okitani R."/>
            <person name="Kawakami T."/>
            <person name="Noguchi S."/>
            <person name="Itoh T."/>
            <person name="Shigeta K."/>
            <person name="Senba T."/>
            <person name="Matsumura K."/>
            <person name="Nakajima Y."/>
            <person name="Mizuno T."/>
            <person name="Morinaga M."/>
            <person name="Sasaki M."/>
            <person name="Togashi T."/>
            <person name="Oyama M."/>
            <person name="Hata H."/>
            <person name="Watanabe M."/>
            <person name="Komatsu T."/>
            <person name="Mizushima-Sugano J."/>
            <person name="Satoh T."/>
            <person name="Shirai Y."/>
            <person name="Takahashi Y."/>
            <person name="Nakagawa K."/>
            <person name="Okumura K."/>
            <person name="Nagase T."/>
            <person name="Nomura N."/>
            <person name="Kikuchi H."/>
            <person name="Masuho Y."/>
            <person name="Yamashita R."/>
            <person name="Nakai K."/>
            <person name="Yada T."/>
            <person name="Nakamura Y."/>
            <person name="Ohara O."/>
            <person name="Isogai T."/>
            <person name="Sugano S."/>
        </authorList>
    </citation>
    <scope>NUCLEOTIDE SEQUENCE [LARGE SCALE MRNA] OF 31-241</scope>
    <source>
        <tissue>Colon</tissue>
    </source>
</reference>
<reference key="4">
    <citation type="journal article" date="2006" name="J. Biol. Chem.">
        <title>CDCA4 is an E2F transcription factor family-induced nuclear factor that regulates E2F-dependent transcriptional activation and cell proliferation.</title>
        <authorList>
            <person name="Hayashi R."/>
            <person name="Goto Y."/>
            <person name="Ikeda R."/>
            <person name="Yokoyama K.K."/>
            <person name="Yoshida K."/>
        </authorList>
    </citation>
    <scope>FUNCTION</scope>
    <scope>SUBCELLULAR LOCATION</scope>
    <scope>TISSUE SPECIFICITY</scope>
    <scope>INDUCTION</scope>
</reference>
<organism>
    <name type="scientific">Homo sapiens</name>
    <name type="common">Human</name>
    <dbReference type="NCBI Taxonomy" id="9606"/>
    <lineage>
        <taxon>Eukaryota</taxon>
        <taxon>Metazoa</taxon>
        <taxon>Chordata</taxon>
        <taxon>Craniata</taxon>
        <taxon>Vertebrata</taxon>
        <taxon>Euteleostomi</taxon>
        <taxon>Mammalia</taxon>
        <taxon>Eutheria</taxon>
        <taxon>Euarchontoglires</taxon>
        <taxon>Primates</taxon>
        <taxon>Haplorrhini</taxon>
        <taxon>Catarrhini</taxon>
        <taxon>Hominidae</taxon>
        <taxon>Homo</taxon>
    </lineage>
</organism>
<protein>
    <recommendedName>
        <fullName>Cell division cycle-associated protein 4</fullName>
    </recommendedName>
    <alternativeName>
        <fullName>Hematopoietic progenitor protein</fullName>
    </alternativeName>
</protein>
<feature type="chain" id="PRO_0000191617" description="Cell division cycle-associated protein 4">
    <location>
        <begin position="1"/>
        <end position="241"/>
    </location>
</feature>
<feature type="domain" description="SERTA" evidence="2">
    <location>
        <begin position="30"/>
        <end position="77"/>
    </location>
</feature>
<feature type="sequence conflict" description="In Ref. 2; AAH25263." evidence="4" ref="2">
    <original>D</original>
    <variation>N</variation>
    <location>
        <position position="93"/>
    </location>
</feature>